<sequence>MTTTTATATADPAEQAHQFPLPKILEYPASTPPILITQGAEGRLYKTTYLLPDIPCALKYRPPKPWRHPILDQRLTKHRILSEARILAKCRRDGVRVPAVYAVDESAGWLMLEWVSGGPVRKSINERLGNRTEGIENDAELKDLMRRIGTAIGNMHKVGIVHGDLTTSNMMLEPLANPQDDNPLHGELVIIDLGLSSGSISDEDRAVDLYVLERAFGSTHPRAECVFSEVLDAYGQTFKQAKVVLKKLEDVRMRGRKRSMLG</sequence>
<accession>Q4HYC1</accession>
<accession>A0A0E0RVU6</accession>
<accession>V6RRS6</accession>
<comment type="function">
    <text evidence="1">Component of the EKC/KEOPS complex that is required for the formation of a threonylcarbamoyl group on adenosine at position 37 (t(6)A37) in tRNAs that read codons beginning with adenine. The complex is probably involved in the transfer of the threonylcarbamoyl moiety of threonylcarbamoyl-AMP (TC-AMP) to the N6 group of A37. BUD32 has ATPase activity in the context of the EKC/KEOPS complex and likely plays a supporting role to the catalytic subunit KAE1. The EKC/KEOPS complex also promotes both telomere uncapping and telomere elongation. The complex is required for efficient recruitment of transcriptional coactivators.</text>
</comment>
<comment type="catalytic activity">
    <reaction evidence="1">
        <text>L-seryl-[protein] + ATP = O-phospho-L-seryl-[protein] + ADP + H(+)</text>
        <dbReference type="Rhea" id="RHEA:17989"/>
        <dbReference type="Rhea" id="RHEA-COMP:9863"/>
        <dbReference type="Rhea" id="RHEA-COMP:11604"/>
        <dbReference type="ChEBI" id="CHEBI:15378"/>
        <dbReference type="ChEBI" id="CHEBI:29999"/>
        <dbReference type="ChEBI" id="CHEBI:30616"/>
        <dbReference type="ChEBI" id="CHEBI:83421"/>
        <dbReference type="ChEBI" id="CHEBI:456216"/>
        <dbReference type="EC" id="2.7.11.1"/>
    </reaction>
</comment>
<comment type="catalytic activity">
    <reaction evidence="1">
        <text>L-threonyl-[protein] + ATP = O-phospho-L-threonyl-[protein] + ADP + H(+)</text>
        <dbReference type="Rhea" id="RHEA:46608"/>
        <dbReference type="Rhea" id="RHEA-COMP:11060"/>
        <dbReference type="Rhea" id="RHEA-COMP:11605"/>
        <dbReference type="ChEBI" id="CHEBI:15378"/>
        <dbReference type="ChEBI" id="CHEBI:30013"/>
        <dbReference type="ChEBI" id="CHEBI:30616"/>
        <dbReference type="ChEBI" id="CHEBI:61977"/>
        <dbReference type="ChEBI" id="CHEBI:456216"/>
        <dbReference type="EC" id="2.7.11.1"/>
    </reaction>
</comment>
<comment type="subunit">
    <text evidence="1">Component of the EKC/KEOPS complex composed of at least BUD32, CGI121, GON7, KAE1 and PCC1; the whole complex dimerizes.</text>
</comment>
<comment type="subcellular location">
    <subcellularLocation>
        <location evidence="1">Cytoplasm</location>
    </subcellularLocation>
    <subcellularLocation>
        <location evidence="1">Nucleus</location>
    </subcellularLocation>
    <subcellularLocation>
        <location evidence="1">Chromosome</location>
        <location evidence="1">Telomere</location>
    </subcellularLocation>
</comment>
<comment type="domain">
    <text evidence="1 2">This protein is considered an atypical serine/threonine kinase, because it lacks the conventional structural elements necessary for the substrate recognition as well as a lysine residue that in all other serine/threonine kinases participates in the catalytic event (By similarity). BUD32 has protein kinase activity in vitro, but in the context of the EKC/KEOPS complex, the catalytic subunit KAE1 switches the activity of BUD32 from kinase into ATPase (By similarity).</text>
</comment>
<comment type="similarity">
    <text evidence="5">Belongs to the protein kinase superfamily. BUD32 family.</text>
</comment>
<reference key="1">
    <citation type="journal article" date="2007" name="Science">
        <title>The Fusarium graminearum genome reveals a link between localized polymorphism and pathogen specialization.</title>
        <authorList>
            <person name="Cuomo C.A."/>
            <person name="Gueldener U."/>
            <person name="Xu J.-R."/>
            <person name="Trail F."/>
            <person name="Turgeon B.G."/>
            <person name="Di Pietro A."/>
            <person name="Walton J.D."/>
            <person name="Ma L.-J."/>
            <person name="Baker S.E."/>
            <person name="Rep M."/>
            <person name="Adam G."/>
            <person name="Antoniw J."/>
            <person name="Baldwin T."/>
            <person name="Calvo S.E."/>
            <person name="Chang Y.-L."/>
            <person name="DeCaprio D."/>
            <person name="Gale L.R."/>
            <person name="Gnerre S."/>
            <person name="Goswami R.S."/>
            <person name="Hammond-Kosack K."/>
            <person name="Harris L.J."/>
            <person name="Hilburn K."/>
            <person name="Kennell J.C."/>
            <person name="Kroken S."/>
            <person name="Magnuson J.K."/>
            <person name="Mannhaupt G."/>
            <person name="Mauceli E.W."/>
            <person name="Mewes H.-W."/>
            <person name="Mitterbauer R."/>
            <person name="Muehlbauer G."/>
            <person name="Muensterkoetter M."/>
            <person name="Nelson D."/>
            <person name="O'Donnell K."/>
            <person name="Ouellet T."/>
            <person name="Qi W."/>
            <person name="Quesneville H."/>
            <person name="Roncero M.I.G."/>
            <person name="Seong K.-Y."/>
            <person name="Tetko I.V."/>
            <person name="Urban M."/>
            <person name="Waalwijk C."/>
            <person name="Ward T.J."/>
            <person name="Yao J."/>
            <person name="Birren B.W."/>
            <person name="Kistler H.C."/>
        </authorList>
    </citation>
    <scope>NUCLEOTIDE SEQUENCE [LARGE SCALE GENOMIC DNA]</scope>
    <source>
        <strain>ATCC MYA-4620 / CBS 123657 / FGSC 9075 / NRRL 31084 / PH-1</strain>
    </source>
</reference>
<reference key="2">
    <citation type="journal article" date="2010" name="Nature">
        <title>Comparative genomics reveals mobile pathogenicity chromosomes in Fusarium.</title>
        <authorList>
            <person name="Ma L.-J."/>
            <person name="van der Does H.C."/>
            <person name="Borkovich K.A."/>
            <person name="Coleman J.J."/>
            <person name="Daboussi M.-J."/>
            <person name="Di Pietro A."/>
            <person name="Dufresne M."/>
            <person name="Freitag M."/>
            <person name="Grabherr M."/>
            <person name="Henrissat B."/>
            <person name="Houterman P.M."/>
            <person name="Kang S."/>
            <person name="Shim W.-B."/>
            <person name="Woloshuk C."/>
            <person name="Xie X."/>
            <person name="Xu J.-R."/>
            <person name="Antoniw J."/>
            <person name="Baker S.E."/>
            <person name="Bluhm B.H."/>
            <person name="Breakspear A."/>
            <person name="Brown D.W."/>
            <person name="Butchko R.A.E."/>
            <person name="Chapman S."/>
            <person name="Coulson R."/>
            <person name="Coutinho P.M."/>
            <person name="Danchin E.G.J."/>
            <person name="Diener A."/>
            <person name="Gale L.R."/>
            <person name="Gardiner D.M."/>
            <person name="Goff S."/>
            <person name="Hammond-Kosack K.E."/>
            <person name="Hilburn K."/>
            <person name="Hua-Van A."/>
            <person name="Jonkers W."/>
            <person name="Kazan K."/>
            <person name="Kodira C.D."/>
            <person name="Koehrsen M."/>
            <person name="Kumar L."/>
            <person name="Lee Y.-H."/>
            <person name="Li L."/>
            <person name="Manners J.M."/>
            <person name="Miranda-Saavedra D."/>
            <person name="Mukherjee M."/>
            <person name="Park G."/>
            <person name="Park J."/>
            <person name="Park S.-Y."/>
            <person name="Proctor R.H."/>
            <person name="Regev A."/>
            <person name="Ruiz-Roldan M.C."/>
            <person name="Sain D."/>
            <person name="Sakthikumar S."/>
            <person name="Sykes S."/>
            <person name="Schwartz D.C."/>
            <person name="Turgeon B.G."/>
            <person name="Wapinski I."/>
            <person name="Yoder O."/>
            <person name="Young S."/>
            <person name="Zeng Q."/>
            <person name="Zhou S."/>
            <person name="Galagan J."/>
            <person name="Cuomo C.A."/>
            <person name="Kistler H.C."/>
            <person name="Rep M."/>
        </authorList>
    </citation>
    <scope>GENOME REANNOTATION</scope>
    <source>
        <strain>ATCC MYA-4620 / CBS 123657 / FGSC 9075 / NRRL 31084 / PH-1</strain>
    </source>
</reference>
<reference key="3">
    <citation type="journal article" date="2015" name="BMC Genomics">
        <title>The completed genome sequence of the pathogenic ascomycete fungus Fusarium graminearum.</title>
        <authorList>
            <person name="King R."/>
            <person name="Urban M."/>
            <person name="Hammond-Kosack M.C.U."/>
            <person name="Hassani-Pak K."/>
            <person name="Hammond-Kosack K.E."/>
        </authorList>
    </citation>
    <scope>NUCLEOTIDE SEQUENCE [LARGE SCALE GENOMIC DNA]</scope>
    <source>
        <strain>ATCC MYA-4620 / CBS 123657 / FGSC 9075 / NRRL 31084 / PH-1</strain>
    </source>
</reference>
<proteinExistence type="inferred from homology"/>
<name>BUD32_GIBZE</name>
<protein>
    <recommendedName>
        <fullName>EKC/KEOPS complex subunit BUD32</fullName>
        <ecNumber evidence="2">3.6.-.-</ecNumber>
    </recommendedName>
    <alternativeName>
        <fullName>Atypical serine/threonine protein kinase BUD32</fullName>
        <ecNumber evidence="1">2.7.11.1</ecNumber>
    </alternativeName>
</protein>
<evidence type="ECO:0000250" key="1">
    <source>
        <dbReference type="UniProtKB" id="P53323"/>
    </source>
</evidence>
<evidence type="ECO:0000250" key="2">
    <source>
        <dbReference type="UniProtKB" id="Q9UYB9"/>
    </source>
</evidence>
<evidence type="ECO:0000255" key="3">
    <source>
        <dbReference type="PROSITE-ProRule" id="PRU00159"/>
    </source>
</evidence>
<evidence type="ECO:0000255" key="4">
    <source>
        <dbReference type="PROSITE-ProRule" id="PRU10028"/>
    </source>
</evidence>
<evidence type="ECO:0000305" key="5"/>
<feature type="chain" id="PRO_0000278915" description="EKC/KEOPS complex subunit BUD32">
    <location>
        <begin position="1"/>
        <end position="262"/>
    </location>
</feature>
<feature type="domain" description="Protein kinase" evidence="3">
    <location>
        <begin position="30"/>
        <end position="262"/>
    </location>
</feature>
<feature type="active site" description="Proton acceptor" evidence="3 4">
    <location>
        <position position="164"/>
    </location>
</feature>
<feature type="binding site" evidence="3">
    <location>
        <begin position="36"/>
        <end position="44"/>
    </location>
    <ligand>
        <name>ATP</name>
        <dbReference type="ChEBI" id="CHEBI:30616"/>
    </ligand>
</feature>
<feature type="binding site" evidence="3">
    <location>
        <position position="59"/>
    </location>
    <ligand>
        <name>ATP</name>
        <dbReference type="ChEBI" id="CHEBI:30616"/>
    </ligand>
</feature>
<keyword id="KW-0010">Activator</keyword>
<keyword id="KW-0067">ATP-binding</keyword>
<keyword id="KW-0158">Chromosome</keyword>
<keyword id="KW-0963">Cytoplasm</keyword>
<keyword id="KW-0378">Hydrolase</keyword>
<keyword id="KW-0418">Kinase</keyword>
<keyword id="KW-0547">Nucleotide-binding</keyword>
<keyword id="KW-0539">Nucleus</keyword>
<keyword id="KW-0597">Phosphoprotein</keyword>
<keyword id="KW-1185">Reference proteome</keyword>
<keyword id="KW-0723">Serine/threonine-protein kinase</keyword>
<keyword id="KW-0779">Telomere</keyword>
<keyword id="KW-0804">Transcription</keyword>
<keyword id="KW-0805">Transcription regulation</keyword>
<keyword id="KW-0808">Transferase</keyword>
<keyword id="KW-0819">tRNA processing</keyword>
<organism>
    <name type="scientific">Gibberella zeae (strain ATCC MYA-4620 / CBS 123657 / FGSC 9075 / NRRL 31084 / PH-1)</name>
    <name type="common">Wheat head blight fungus</name>
    <name type="synonym">Fusarium graminearum</name>
    <dbReference type="NCBI Taxonomy" id="229533"/>
    <lineage>
        <taxon>Eukaryota</taxon>
        <taxon>Fungi</taxon>
        <taxon>Dikarya</taxon>
        <taxon>Ascomycota</taxon>
        <taxon>Pezizomycotina</taxon>
        <taxon>Sordariomycetes</taxon>
        <taxon>Hypocreomycetidae</taxon>
        <taxon>Hypocreales</taxon>
        <taxon>Nectriaceae</taxon>
        <taxon>Fusarium</taxon>
    </lineage>
</organism>
<dbReference type="EC" id="3.6.-.-" evidence="2"/>
<dbReference type="EC" id="2.7.11.1" evidence="1"/>
<dbReference type="EMBL" id="DS231669">
    <property type="protein sequence ID" value="ESU16702.1"/>
    <property type="molecule type" value="Genomic_DNA"/>
</dbReference>
<dbReference type="EMBL" id="HG970332">
    <property type="protein sequence ID" value="CEF75371.1"/>
    <property type="molecule type" value="Genomic_DNA"/>
</dbReference>
<dbReference type="RefSeq" id="XP_011318964.1">
    <property type="nucleotide sequence ID" value="XM_011320662.1"/>
</dbReference>
<dbReference type="SMR" id="Q4HYC1"/>
<dbReference type="FunCoup" id="Q4HYC1">
    <property type="interactions" value="898"/>
</dbReference>
<dbReference type="STRING" id="229533.Q4HYC1"/>
<dbReference type="GeneID" id="23556960"/>
<dbReference type="KEGG" id="fgr:FGSG_10037"/>
<dbReference type="VEuPathDB" id="FungiDB:FGRAMPH1_01G07133"/>
<dbReference type="eggNOG" id="KOG3087">
    <property type="taxonomic scope" value="Eukaryota"/>
</dbReference>
<dbReference type="HOGENOM" id="CLU_063953_0_0_1"/>
<dbReference type="InParanoid" id="Q4HYC1"/>
<dbReference type="OrthoDB" id="40153at110618"/>
<dbReference type="PHI-base" id="PHI:1201"/>
<dbReference type="Proteomes" id="UP000070720">
    <property type="component" value="Chromosome 1"/>
</dbReference>
<dbReference type="GO" id="GO:0000781">
    <property type="term" value="C:chromosome, telomeric region"/>
    <property type="evidence" value="ECO:0007669"/>
    <property type="project" value="UniProtKB-SubCell"/>
</dbReference>
<dbReference type="GO" id="GO:0005829">
    <property type="term" value="C:cytosol"/>
    <property type="evidence" value="ECO:0007669"/>
    <property type="project" value="TreeGrafter"/>
</dbReference>
<dbReference type="GO" id="GO:0000408">
    <property type="term" value="C:EKC/KEOPS complex"/>
    <property type="evidence" value="ECO:0007669"/>
    <property type="project" value="TreeGrafter"/>
</dbReference>
<dbReference type="GO" id="GO:0005634">
    <property type="term" value="C:nucleus"/>
    <property type="evidence" value="ECO:0007669"/>
    <property type="project" value="UniProtKB-SubCell"/>
</dbReference>
<dbReference type="GO" id="GO:0005524">
    <property type="term" value="F:ATP binding"/>
    <property type="evidence" value="ECO:0007669"/>
    <property type="project" value="UniProtKB-KW"/>
</dbReference>
<dbReference type="GO" id="GO:0016787">
    <property type="term" value="F:hydrolase activity"/>
    <property type="evidence" value="ECO:0007669"/>
    <property type="project" value="UniProtKB-KW"/>
</dbReference>
<dbReference type="GO" id="GO:0106310">
    <property type="term" value="F:protein serine kinase activity"/>
    <property type="evidence" value="ECO:0007669"/>
    <property type="project" value="RHEA"/>
</dbReference>
<dbReference type="GO" id="GO:0004674">
    <property type="term" value="F:protein serine/threonine kinase activity"/>
    <property type="evidence" value="ECO:0007669"/>
    <property type="project" value="UniProtKB-KW"/>
</dbReference>
<dbReference type="GO" id="GO:0008033">
    <property type="term" value="P:tRNA processing"/>
    <property type="evidence" value="ECO:0007669"/>
    <property type="project" value="UniProtKB-KW"/>
</dbReference>
<dbReference type="GO" id="GO:0070525">
    <property type="term" value="P:tRNA threonylcarbamoyladenosine metabolic process"/>
    <property type="evidence" value="ECO:0007669"/>
    <property type="project" value="TreeGrafter"/>
</dbReference>
<dbReference type="FunFam" id="3.30.200.20:FF:000603">
    <property type="entry name" value="EKC/KEOPS complex subunit bud32"/>
    <property type="match status" value="1"/>
</dbReference>
<dbReference type="FunFam" id="1.10.510.10:FF:000845">
    <property type="entry name" value="Probable bifunctional tRNA threonylcarbamoyladenosine biosynthesis protein"/>
    <property type="match status" value="1"/>
</dbReference>
<dbReference type="Gene3D" id="3.30.200.20">
    <property type="entry name" value="Phosphorylase Kinase, domain 1"/>
    <property type="match status" value="1"/>
</dbReference>
<dbReference type="Gene3D" id="1.10.510.10">
    <property type="entry name" value="Transferase(Phosphotransferase) domain 1"/>
    <property type="match status" value="1"/>
</dbReference>
<dbReference type="InterPro" id="IPR022495">
    <property type="entry name" value="Bud32"/>
</dbReference>
<dbReference type="InterPro" id="IPR011009">
    <property type="entry name" value="Kinase-like_dom_sf"/>
</dbReference>
<dbReference type="InterPro" id="IPR000719">
    <property type="entry name" value="Prot_kinase_dom"/>
</dbReference>
<dbReference type="InterPro" id="IPR008266">
    <property type="entry name" value="Tyr_kinase_AS"/>
</dbReference>
<dbReference type="NCBIfam" id="TIGR03724">
    <property type="entry name" value="arch_bud32"/>
    <property type="match status" value="1"/>
</dbReference>
<dbReference type="PANTHER" id="PTHR12209:SF0">
    <property type="entry name" value="EKC_KEOPS COMPLEX SUBUNIT TP53RK"/>
    <property type="match status" value="1"/>
</dbReference>
<dbReference type="PANTHER" id="PTHR12209">
    <property type="entry name" value="NON-SPECIFIC SERINE/THREONINE PROTEIN KINASE"/>
    <property type="match status" value="1"/>
</dbReference>
<dbReference type="Pfam" id="PF00069">
    <property type="entry name" value="Pkinase"/>
    <property type="match status" value="1"/>
</dbReference>
<dbReference type="SMART" id="SM00220">
    <property type="entry name" value="S_TKc"/>
    <property type="match status" value="1"/>
</dbReference>
<dbReference type="SUPFAM" id="SSF56112">
    <property type="entry name" value="Protein kinase-like (PK-like)"/>
    <property type="match status" value="1"/>
</dbReference>
<dbReference type="PROSITE" id="PS50011">
    <property type="entry name" value="PROTEIN_KINASE_DOM"/>
    <property type="match status" value="1"/>
</dbReference>
<dbReference type="PROSITE" id="PS00109">
    <property type="entry name" value="PROTEIN_KINASE_TYR"/>
    <property type="match status" value="1"/>
</dbReference>
<gene>
    <name type="primary">BUD32</name>
    <name type="ORF">FGRRES_10037</name>
    <name type="ORF">FGSG_10037</name>
</gene>